<comment type="function">
    <text evidence="5">Pectin methylesterase (PME) inhibitor that probably targets root-expressed PME and PME3 in a moderate pH-dependent manner, mainly in slightly acidic conditions (pH 6.3 and 5.0) and to some extent at pH 7.5; this processus relies on changes in the protonation of amino acids involved in intermolecular and intramolecular interactions (PubMed:28034952). Regulates de-methylesterification of pectins in roots and affects root growth (PubMed:28034952).</text>
</comment>
<comment type="subunit">
    <text evidence="5">Binds reversibly to PME3 to inhibit its activity; the stability of the PME3-PMEI9 complex and the inhibition of the pectin methylesterase (PME) activity is pH-dependent, based on protonation status of amino-acids at the complex interface.</text>
</comment>
<comment type="subcellular location">
    <subcellularLocation>
        <location evidence="2">Secreted</location>
        <location evidence="2">Extracellular space</location>
        <location evidence="2">Apoplast</location>
    </subcellularLocation>
</comment>
<comment type="tissue specificity">
    <text evidence="5">Highly expressed in roots and etiolated hypocotyls. Expressed in seedlings, leaves, stems, siliques, floral buds and mature seeds.</text>
</comment>
<comment type="similarity">
    <text evidence="7">Belongs to the PMEI family.</text>
</comment>
<comment type="sequence caution" evidence="7">
    <conflict type="frameshift">
        <sequence resource="EMBL-CDS" id="BAE99378"/>
    </conflict>
</comment>
<organism>
    <name type="scientific">Arabidopsis thaliana</name>
    <name type="common">Mouse-ear cress</name>
    <dbReference type="NCBI Taxonomy" id="3702"/>
    <lineage>
        <taxon>Eukaryota</taxon>
        <taxon>Viridiplantae</taxon>
        <taxon>Streptophyta</taxon>
        <taxon>Embryophyta</taxon>
        <taxon>Tracheophyta</taxon>
        <taxon>Spermatophyta</taxon>
        <taxon>Magnoliopsida</taxon>
        <taxon>eudicotyledons</taxon>
        <taxon>Gunneridae</taxon>
        <taxon>Pentapetalae</taxon>
        <taxon>rosids</taxon>
        <taxon>malvids</taxon>
        <taxon>Brassicales</taxon>
        <taxon>Brassicaceae</taxon>
        <taxon>Camelineae</taxon>
        <taxon>Arabidopsis</taxon>
    </lineage>
</organism>
<sequence length="204" mass="22684">MELKNTIFLVILLSITILQSSSATPNRSESDQFIVSSCQTTQYPSLCVHTLSAYATKIRHNNDQDLAQTALIISLARAKSVTIFVAKLTKETPKFKRREYLAIKDCIEVLGNSVDRLAQSVKELARAGHAVASEDFMWKMSNVQTWVSAALTDETTCLDGFSERAMGGKVKRLIRYKVVHVAQVTSNALALVNQFAEKRSVKFP</sequence>
<feature type="signal peptide" evidence="3">
    <location>
        <begin position="1"/>
        <end position="23"/>
    </location>
</feature>
<feature type="chain" id="PRO_5008430306" description="Pectinesterase inhibitor 9">
    <location>
        <begin position="24"/>
        <end position="204"/>
    </location>
</feature>
<feature type="glycosylation site" description="N-linked (GlcNAc...) asparagine" evidence="4">
    <location>
        <position position="26"/>
    </location>
</feature>
<feature type="disulfide bond" evidence="1">
    <location>
        <begin position="38"/>
        <end position="47"/>
    </location>
</feature>
<feature type="disulfide bond" evidence="1">
    <location>
        <begin position="106"/>
        <end position="157"/>
    </location>
</feature>
<dbReference type="EMBL" id="AC007190">
    <property type="protein sequence ID" value="AAF19545.1"/>
    <property type="molecule type" value="Genomic_DNA"/>
</dbReference>
<dbReference type="EMBL" id="CP002684">
    <property type="protein sequence ID" value="AEE34002.1"/>
    <property type="molecule type" value="Genomic_DNA"/>
</dbReference>
<dbReference type="EMBL" id="AK227371">
    <property type="protein sequence ID" value="BAE99378.1"/>
    <property type="status" value="ALT_FRAME"/>
    <property type="molecule type" value="mRNA"/>
</dbReference>
<dbReference type="RefSeq" id="NP_564802.1">
    <property type="nucleotide sequence ID" value="NM_104955.3"/>
</dbReference>
<dbReference type="SMR" id="Q9SI72"/>
<dbReference type="FunCoup" id="Q9SI72">
    <property type="interactions" value="45"/>
</dbReference>
<dbReference type="STRING" id="3702.Q9SI72"/>
<dbReference type="GlyCosmos" id="Q9SI72">
    <property type="glycosylation" value="1 site, No reported glycans"/>
</dbReference>
<dbReference type="GlyGen" id="Q9SI72">
    <property type="glycosylation" value="1 site"/>
</dbReference>
<dbReference type="PaxDb" id="3702-AT1G62770.1"/>
<dbReference type="ProteomicsDB" id="234782"/>
<dbReference type="EnsemblPlants" id="AT1G62770.1">
    <property type="protein sequence ID" value="AT1G62770.1"/>
    <property type="gene ID" value="AT1G62770"/>
</dbReference>
<dbReference type="GeneID" id="842576"/>
<dbReference type="Gramene" id="AT1G62770.1">
    <property type="protein sequence ID" value="AT1G62770.1"/>
    <property type="gene ID" value="AT1G62770"/>
</dbReference>
<dbReference type="KEGG" id="ath:AT1G62770"/>
<dbReference type="Araport" id="AT1G62770"/>
<dbReference type="TAIR" id="AT1G62770">
    <property type="gene designation" value="PMEI9"/>
</dbReference>
<dbReference type="eggNOG" id="ENOG502QXIN">
    <property type="taxonomic scope" value="Eukaryota"/>
</dbReference>
<dbReference type="HOGENOM" id="CLU_033761_0_2_1"/>
<dbReference type="InParanoid" id="Q9SI72"/>
<dbReference type="OMA" id="GHTGQFS"/>
<dbReference type="PhylomeDB" id="Q9SI72"/>
<dbReference type="CD-CODE" id="4299E36E">
    <property type="entry name" value="Nucleolus"/>
</dbReference>
<dbReference type="PRO" id="PR:Q9SI72"/>
<dbReference type="Proteomes" id="UP000006548">
    <property type="component" value="Chromosome 1"/>
</dbReference>
<dbReference type="ExpressionAtlas" id="Q9SI72">
    <property type="expression patterns" value="baseline and differential"/>
</dbReference>
<dbReference type="GO" id="GO:0048046">
    <property type="term" value="C:apoplast"/>
    <property type="evidence" value="ECO:0007669"/>
    <property type="project" value="UniProtKB-SubCell"/>
</dbReference>
<dbReference type="GO" id="GO:0046910">
    <property type="term" value="F:pectinesterase inhibitor activity"/>
    <property type="evidence" value="ECO:0000314"/>
    <property type="project" value="TAIR"/>
</dbReference>
<dbReference type="CDD" id="cd15798">
    <property type="entry name" value="PMEI-like_3"/>
    <property type="match status" value="1"/>
</dbReference>
<dbReference type="FunFam" id="1.20.140.40:FF:000005">
    <property type="entry name" value="Pectin methylesterase inhibitor 1"/>
    <property type="match status" value="1"/>
</dbReference>
<dbReference type="Gene3D" id="1.20.140.40">
    <property type="entry name" value="Invertase/pectin methylesterase inhibitor family protein"/>
    <property type="match status" value="1"/>
</dbReference>
<dbReference type="InterPro" id="IPR035513">
    <property type="entry name" value="Invertase/methylesterase_inhib"/>
</dbReference>
<dbReference type="InterPro" id="IPR006501">
    <property type="entry name" value="Pectinesterase_inhib_dom"/>
</dbReference>
<dbReference type="InterPro" id="IPR051955">
    <property type="entry name" value="PME_Inhibitor"/>
</dbReference>
<dbReference type="NCBIfam" id="TIGR01614">
    <property type="entry name" value="PME_inhib"/>
    <property type="match status" value="1"/>
</dbReference>
<dbReference type="PANTHER" id="PTHR31080:SF207">
    <property type="entry name" value="PECTINESTERASE INHIBITOR 9"/>
    <property type="match status" value="1"/>
</dbReference>
<dbReference type="PANTHER" id="PTHR31080">
    <property type="entry name" value="PECTINESTERASE INHIBITOR-LIKE"/>
    <property type="match status" value="1"/>
</dbReference>
<dbReference type="Pfam" id="PF04043">
    <property type="entry name" value="PMEI"/>
    <property type="match status" value="1"/>
</dbReference>
<dbReference type="SMART" id="SM00856">
    <property type="entry name" value="PMEI"/>
    <property type="match status" value="1"/>
</dbReference>
<dbReference type="SUPFAM" id="SSF101148">
    <property type="entry name" value="Plant invertase/pectin methylesterase inhibitor"/>
    <property type="match status" value="1"/>
</dbReference>
<reference key="1">
    <citation type="journal article" date="2000" name="Nature">
        <title>Sequence and analysis of chromosome 1 of the plant Arabidopsis thaliana.</title>
        <authorList>
            <person name="Theologis A."/>
            <person name="Ecker J.R."/>
            <person name="Palm C.J."/>
            <person name="Federspiel N.A."/>
            <person name="Kaul S."/>
            <person name="White O."/>
            <person name="Alonso J."/>
            <person name="Altafi H."/>
            <person name="Araujo R."/>
            <person name="Bowman C.L."/>
            <person name="Brooks S.Y."/>
            <person name="Buehler E."/>
            <person name="Chan A."/>
            <person name="Chao Q."/>
            <person name="Chen H."/>
            <person name="Cheuk R.F."/>
            <person name="Chin C.W."/>
            <person name="Chung M.K."/>
            <person name="Conn L."/>
            <person name="Conway A.B."/>
            <person name="Conway A.R."/>
            <person name="Creasy T.H."/>
            <person name="Dewar K."/>
            <person name="Dunn P."/>
            <person name="Etgu P."/>
            <person name="Feldblyum T.V."/>
            <person name="Feng J.-D."/>
            <person name="Fong B."/>
            <person name="Fujii C.Y."/>
            <person name="Gill J.E."/>
            <person name="Goldsmith A.D."/>
            <person name="Haas B."/>
            <person name="Hansen N.F."/>
            <person name="Hughes B."/>
            <person name="Huizar L."/>
            <person name="Hunter J.L."/>
            <person name="Jenkins J."/>
            <person name="Johnson-Hopson C."/>
            <person name="Khan S."/>
            <person name="Khaykin E."/>
            <person name="Kim C.J."/>
            <person name="Koo H.L."/>
            <person name="Kremenetskaia I."/>
            <person name="Kurtz D.B."/>
            <person name="Kwan A."/>
            <person name="Lam B."/>
            <person name="Langin-Hooper S."/>
            <person name="Lee A."/>
            <person name="Lee J.M."/>
            <person name="Lenz C.A."/>
            <person name="Li J.H."/>
            <person name="Li Y.-P."/>
            <person name="Lin X."/>
            <person name="Liu S.X."/>
            <person name="Liu Z.A."/>
            <person name="Luros J.S."/>
            <person name="Maiti R."/>
            <person name="Marziali A."/>
            <person name="Militscher J."/>
            <person name="Miranda M."/>
            <person name="Nguyen M."/>
            <person name="Nierman W.C."/>
            <person name="Osborne B.I."/>
            <person name="Pai G."/>
            <person name="Peterson J."/>
            <person name="Pham P.K."/>
            <person name="Rizzo M."/>
            <person name="Rooney T."/>
            <person name="Rowley D."/>
            <person name="Sakano H."/>
            <person name="Salzberg S.L."/>
            <person name="Schwartz J.R."/>
            <person name="Shinn P."/>
            <person name="Southwick A.M."/>
            <person name="Sun H."/>
            <person name="Tallon L.J."/>
            <person name="Tambunga G."/>
            <person name="Toriumi M.J."/>
            <person name="Town C.D."/>
            <person name="Utterback T."/>
            <person name="Van Aken S."/>
            <person name="Vaysberg M."/>
            <person name="Vysotskaia V.S."/>
            <person name="Walker M."/>
            <person name="Wu D."/>
            <person name="Yu G."/>
            <person name="Fraser C.M."/>
            <person name="Venter J.C."/>
            <person name="Davis R.W."/>
        </authorList>
    </citation>
    <scope>NUCLEOTIDE SEQUENCE [LARGE SCALE GENOMIC DNA]</scope>
    <source>
        <strain>cv. Columbia</strain>
    </source>
</reference>
<reference key="2">
    <citation type="journal article" date="2017" name="Plant J.">
        <title>Araport11: a complete reannotation of the Arabidopsis thaliana reference genome.</title>
        <authorList>
            <person name="Cheng C.Y."/>
            <person name="Krishnakumar V."/>
            <person name="Chan A.P."/>
            <person name="Thibaud-Nissen F."/>
            <person name="Schobel S."/>
            <person name="Town C.D."/>
        </authorList>
    </citation>
    <scope>GENOME REANNOTATION</scope>
    <source>
        <strain>cv. Columbia</strain>
    </source>
</reference>
<reference key="3">
    <citation type="submission" date="2006-07" db="EMBL/GenBank/DDBJ databases">
        <title>Large-scale analysis of RIKEN Arabidopsis full-length (RAFL) cDNAs.</title>
        <authorList>
            <person name="Totoki Y."/>
            <person name="Seki M."/>
            <person name="Ishida J."/>
            <person name="Nakajima M."/>
            <person name="Enju A."/>
            <person name="Kamiya A."/>
            <person name="Narusaka M."/>
            <person name="Shin-i T."/>
            <person name="Nakagawa M."/>
            <person name="Sakamoto N."/>
            <person name="Oishi K."/>
            <person name="Kohara Y."/>
            <person name="Kobayashi M."/>
            <person name="Toyoda A."/>
            <person name="Sakaki Y."/>
            <person name="Sakurai T."/>
            <person name="Iida K."/>
            <person name="Akiyama K."/>
            <person name="Satou M."/>
            <person name="Toyoda T."/>
            <person name="Konagaya A."/>
            <person name="Carninci P."/>
            <person name="Kawai J."/>
            <person name="Hayashizaki Y."/>
            <person name="Shinozaki K."/>
        </authorList>
    </citation>
    <scope>NUCLEOTIDE SEQUENCE [LARGE SCALE MRNA]</scope>
    <source>
        <strain>cv. Columbia</strain>
    </source>
</reference>
<reference key="4">
    <citation type="journal article" date="2017" name="Plant Physiol.">
        <title>Combined experimental and computational approaches reveal distinct pH-dependence of pectin methyl esterase inhibitors.</title>
        <authorList>
            <person name="Hocq L."/>
            <person name="Senechal F."/>
            <person name="Lefebvre V."/>
            <person name="Lehner A."/>
            <person name="Domon J.-M."/>
            <person name="Mollet J.-C."/>
            <person name="Dehors J."/>
            <person name="Pageau K."/>
            <person name="Marcelo P."/>
            <person name="Guerineau F."/>
            <person name="Kolsek K."/>
            <person name="Mercadante D."/>
            <person name="Pelloux J."/>
        </authorList>
    </citation>
    <scope>FUNCTION</scope>
    <scope>TISSUE SPECIFICITY</scope>
    <scope>INTERACTION WITH PME3</scope>
</reference>
<keyword id="KW-0052">Apoplast</keyword>
<keyword id="KW-1015">Disulfide bond</keyword>
<keyword id="KW-0325">Glycoprotein</keyword>
<keyword id="KW-1185">Reference proteome</keyword>
<keyword id="KW-0964">Secreted</keyword>
<keyword id="KW-0732">Signal</keyword>
<evidence type="ECO:0000250" key="1">
    <source>
        <dbReference type="UniProtKB" id="Q9LNF2"/>
    </source>
</evidence>
<evidence type="ECO:0000250" key="2">
    <source>
        <dbReference type="UniProtKB" id="Q9STY5"/>
    </source>
</evidence>
<evidence type="ECO:0000255" key="3"/>
<evidence type="ECO:0000255" key="4">
    <source>
        <dbReference type="PROSITE-ProRule" id="PRU00498"/>
    </source>
</evidence>
<evidence type="ECO:0000269" key="5">
    <source>
    </source>
</evidence>
<evidence type="ECO:0000303" key="6">
    <source>
    </source>
</evidence>
<evidence type="ECO:0000305" key="7"/>
<evidence type="ECO:0000312" key="8">
    <source>
        <dbReference type="Araport" id="AT1G62770"/>
    </source>
</evidence>
<evidence type="ECO:0000312" key="9">
    <source>
        <dbReference type="EMBL" id="AAF19545.1"/>
    </source>
</evidence>
<accession>Q9SI72</accession>
<accession>Q0WU20</accession>
<protein>
    <recommendedName>
        <fullName evidence="7">Pectinesterase inhibitor 9</fullName>
    </recommendedName>
    <alternativeName>
        <fullName evidence="6">Pectin methylesterase inhibitor 9</fullName>
        <shortName evidence="6">AtPMEI9</shortName>
    </alternativeName>
</protein>
<name>PMEI9_ARATH</name>
<gene>
    <name evidence="6" type="primary">PMEI9</name>
    <name evidence="8" type="ordered locus">At1g62770</name>
    <name evidence="9" type="ORF">F23N19.14</name>
</gene>
<proteinExistence type="evidence at protein level"/>